<organism>
    <name type="scientific">Solanum lycopersicum</name>
    <name type="common">Tomato</name>
    <name type="synonym">Lycopersicon esculentum</name>
    <dbReference type="NCBI Taxonomy" id="4081"/>
    <lineage>
        <taxon>Eukaryota</taxon>
        <taxon>Viridiplantae</taxon>
        <taxon>Streptophyta</taxon>
        <taxon>Embryophyta</taxon>
        <taxon>Tracheophyta</taxon>
        <taxon>Spermatophyta</taxon>
        <taxon>Magnoliopsida</taxon>
        <taxon>eudicotyledons</taxon>
        <taxon>Gunneridae</taxon>
        <taxon>Pentapetalae</taxon>
        <taxon>asterids</taxon>
        <taxon>lamiids</taxon>
        <taxon>Solanales</taxon>
        <taxon>Solanaceae</taxon>
        <taxon>Solanoideae</taxon>
        <taxon>Solaneae</taxon>
        <taxon>Solanum</taxon>
        <taxon>Solanum subgen. Lycopersicon</taxon>
    </lineage>
</organism>
<comment type="function">
    <text>Destroys radicals which are normally produced within the cells and which are toxic to biological systems.</text>
</comment>
<comment type="catalytic activity">
    <reaction>
        <text>2 superoxide + 2 H(+) = H2O2 + O2</text>
        <dbReference type="Rhea" id="RHEA:20696"/>
        <dbReference type="ChEBI" id="CHEBI:15378"/>
        <dbReference type="ChEBI" id="CHEBI:15379"/>
        <dbReference type="ChEBI" id="CHEBI:16240"/>
        <dbReference type="ChEBI" id="CHEBI:18421"/>
        <dbReference type="EC" id="1.15.1.1"/>
    </reaction>
</comment>
<comment type="cofactor">
    <cofactor evidence="1">
        <name>Cu cation</name>
        <dbReference type="ChEBI" id="CHEBI:23378"/>
    </cofactor>
    <text evidence="1">Binds 1 copper ion per subunit.</text>
</comment>
<comment type="cofactor">
    <cofactor evidence="1">
        <name>Zn(2+)</name>
        <dbReference type="ChEBI" id="CHEBI:29105"/>
    </cofactor>
    <text evidence="1">Binds 1 zinc ion per subunit.</text>
</comment>
<comment type="subunit">
    <text>Homodimer.</text>
</comment>
<comment type="subcellular location">
    <subcellularLocation>
        <location>Cytoplasm</location>
    </subcellularLocation>
</comment>
<comment type="similarity">
    <text evidence="2">Belongs to the Cu-Zn superoxide dismutase family.</text>
</comment>
<keyword id="KW-0049">Antioxidant</keyword>
<keyword id="KW-0186">Copper</keyword>
<keyword id="KW-0963">Cytoplasm</keyword>
<keyword id="KW-1015">Disulfide bond</keyword>
<keyword id="KW-0479">Metal-binding</keyword>
<keyword id="KW-0560">Oxidoreductase</keyword>
<keyword id="KW-1185">Reference proteome</keyword>
<keyword id="KW-0862">Zinc</keyword>
<feature type="initiator methionine" description="Removed" evidence="1">
    <location>
        <position position="1"/>
    </location>
</feature>
<feature type="chain" id="PRO_0000164140" description="Superoxide dismutase [Cu-Zn] 2">
    <location>
        <begin position="2"/>
        <end position="152"/>
    </location>
</feature>
<feature type="binding site" evidence="1">
    <location>
        <position position="45"/>
    </location>
    <ligand>
        <name>Cu cation</name>
        <dbReference type="ChEBI" id="CHEBI:23378"/>
        <note>catalytic</note>
    </ligand>
</feature>
<feature type="binding site" evidence="1">
    <location>
        <position position="47"/>
    </location>
    <ligand>
        <name>Cu cation</name>
        <dbReference type="ChEBI" id="CHEBI:23378"/>
        <note>catalytic</note>
    </ligand>
</feature>
<feature type="binding site" evidence="1">
    <location>
        <position position="62"/>
    </location>
    <ligand>
        <name>Cu cation</name>
        <dbReference type="ChEBI" id="CHEBI:23378"/>
        <note>catalytic</note>
    </ligand>
</feature>
<feature type="binding site" evidence="1">
    <location>
        <position position="62"/>
    </location>
    <ligand>
        <name>Zn(2+)</name>
        <dbReference type="ChEBI" id="CHEBI:29105"/>
        <note>structural</note>
    </ligand>
</feature>
<feature type="binding site" evidence="1">
    <location>
        <position position="70"/>
    </location>
    <ligand>
        <name>Zn(2+)</name>
        <dbReference type="ChEBI" id="CHEBI:29105"/>
        <note>structural</note>
    </ligand>
</feature>
<feature type="binding site" evidence="1">
    <location>
        <position position="79"/>
    </location>
    <ligand>
        <name>Zn(2+)</name>
        <dbReference type="ChEBI" id="CHEBI:29105"/>
        <note>structural</note>
    </ligand>
</feature>
<feature type="binding site" evidence="1">
    <location>
        <position position="82"/>
    </location>
    <ligand>
        <name>Zn(2+)</name>
        <dbReference type="ChEBI" id="CHEBI:29105"/>
        <note>structural</note>
    </ligand>
</feature>
<feature type="binding site" evidence="1">
    <location>
        <position position="119"/>
    </location>
    <ligand>
        <name>Cu cation</name>
        <dbReference type="ChEBI" id="CHEBI:23378"/>
        <note>catalytic</note>
    </ligand>
</feature>
<feature type="disulfide bond" evidence="1">
    <location>
        <begin position="56"/>
        <end position="145"/>
    </location>
</feature>
<evidence type="ECO:0000250" key="1"/>
<evidence type="ECO:0000305" key="2"/>
<proteinExistence type="inferred from homology"/>
<reference key="1">
    <citation type="online journal article" date="1995" name="Plant Gene Register">
        <title>A full-length genomic nucleotide-sequence of the tomato (Lycopersicon esculentum) cytosolic Cu,Zn superoxide dismutase gene (SodCcLe2).</title>
        <authorList>
            <person name="Galun E."/>
            <person name="Ori N."/>
        </authorList>
        <locator>PGR95-041</locator>
    </citation>
    <scope>NUCLEOTIDE SEQUENCE [GENOMIC DNA]</scope>
    <source>
        <strain>cv. VFN8</strain>
        <tissue>Fruit</tissue>
    </source>
</reference>
<protein>
    <recommendedName>
        <fullName>Superoxide dismutase [Cu-Zn] 2</fullName>
        <ecNumber>1.15.1.1</ecNumber>
    </recommendedName>
</protein>
<name>SODC2_SOLLC</name>
<accession>Q43779</accession>
<gene>
    <name type="primary">SODCC.5</name>
    <name type="synonym">SODCC2</name>
</gene>
<dbReference type="EC" id="1.15.1.1"/>
<dbReference type="EMBL" id="X87372">
    <property type="protein sequence ID" value="CAA60826.1"/>
    <property type="molecule type" value="Genomic_DNA"/>
</dbReference>
<dbReference type="PIR" id="S55402">
    <property type="entry name" value="S55402"/>
</dbReference>
<dbReference type="SMR" id="Q43779"/>
<dbReference type="FunCoup" id="Q43779">
    <property type="interactions" value="1617"/>
</dbReference>
<dbReference type="STRING" id="4081.Q43779"/>
<dbReference type="Allergome" id="11322">
    <property type="allergen name" value="Sola l SOD"/>
</dbReference>
<dbReference type="PaxDb" id="4081-Solyc01g067740.2.1"/>
<dbReference type="eggNOG" id="KOG0441">
    <property type="taxonomic scope" value="Eukaryota"/>
</dbReference>
<dbReference type="InParanoid" id="Q43779"/>
<dbReference type="Proteomes" id="UP000004994">
    <property type="component" value="Unplaced"/>
</dbReference>
<dbReference type="ExpressionAtlas" id="Q43779">
    <property type="expression patterns" value="baseline and differential"/>
</dbReference>
<dbReference type="GO" id="GO:0005737">
    <property type="term" value="C:cytoplasm"/>
    <property type="evidence" value="ECO:0007669"/>
    <property type="project" value="UniProtKB-SubCell"/>
</dbReference>
<dbReference type="GO" id="GO:0005507">
    <property type="term" value="F:copper ion binding"/>
    <property type="evidence" value="ECO:0000318"/>
    <property type="project" value="GO_Central"/>
</dbReference>
<dbReference type="GO" id="GO:0004784">
    <property type="term" value="F:superoxide dismutase activity"/>
    <property type="evidence" value="ECO:0000318"/>
    <property type="project" value="GO_Central"/>
</dbReference>
<dbReference type="GO" id="GO:0019430">
    <property type="term" value="P:removal of superoxide radicals"/>
    <property type="evidence" value="ECO:0000318"/>
    <property type="project" value="GO_Central"/>
</dbReference>
<dbReference type="CDD" id="cd00305">
    <property type="entry name" value="Cu-Zn_Superoxide_Dismutase"/>
    <property type="match status" value="1"/>
</dbReference>
<dbReference type="FunFam" id="2.60.40.200:FF:000001">
    <property type="entry name" value="Superoxide dismutase [Cu-Zn]"/>
    <property type="match status" value="1"/>
</dbReference>
<dbReference type="Gene3D" id="2.60.40.200">
    <property type="entry name" value="Superoxide dismutase, copper/zinc binding domain"/>
    <property type="match status" value="1"/>
</dbReference>
<dbReference type="InterPro" id="IPR036423">
    <property type="entry name" value="SOD-like_Cu/Zn_dom_sf"/>
</dbReference>
<dbReference type="InterPro" id="IPR024134">
    <property type="entry name" value="SOD_Cu/Zn_/chaperone"/>
</dbReference>
<dbReference type="InterPro" id="IPR018152">
    <property type="entry name" value="SOD_Cu/Zn_BS"/>
</dbReference>
<dbReference type="InterPro" id="IPR001424">
    <property type="entry name" value="SOD_Cu_Zn_dom"/>
</dbReference>
<dbReference type="PANTHER" id="PTHR10003">
    <property type="entry name" value="SUPEROXIDE DISMUTASE CU-ZN -RELATED"/>
    <property type="match status" value="1"/>
</dbReference>
<dbReference type="Pfam" id="PF00080">
    <property type="entry name" value="Sod_Cu"/>
    <property type="match status" value="1"/>
</dbReference>
<dbReference type="PRINTS" id="PR00068">
    <property type="entry name" value="CUZNDISMTASE"/>
</dbReference>
<dbReference type="SUPFAM" id="SSF49329">
    <property type="entry name" value="Cu,Zn superoxide dismutase-like"/>
    <property type="match status" value="1"/>
</dbReference>
<dbReference type="PROSITE" id="PS00087">
    <property type="entry name" value="SOD_CU_ZN_1"/>
    <property type="match status" value="1"/>
</dbReference>
<dbReference type="PROSITE" id="PS00332">
    <property type="entry name" value="SOD_CU_ZN_2"/>
    <property type="match status" value="1"/>
</dbReference>
<sequence>MVKAVAVLNSSEGVSGTILFTQDGAAPTTVNGNISGLKPGLHGFHVHALGDTTNGCMSTGPHYNPAGKEHGAPEDEVRHAGDLGNITVGEDGTASFTITDKQIPLTGPQSIIGRAVVVHADPDDLGKGGHELSKSTGNAGGRIACGIIGLQG</sequence>